<feature type="chain" id="PRO_0000362692" description="NADH-quinone oxidoreductase subunit A 2">
    <location>
        <begin position="1"/>
        <end position="118"/>
    </location>
</feature>
<feature type="transmembrane region" description="Helical" evidence="1">
    <location>
        <begin position="5"/>
        <end position="25"/>
    </location>
</feature>
<feature type="transmembrane region" description="Helical" evidence="1">
    <location>
        <begin position="60"/>
        <end position="80"/>
    </location>
</feature>
<feature type="transmembrane region" description="Helical" evidence="1">
    <location>
        <begin position="87"/>
        <end position="107"/>
    </location>
</feature>
<reference key="1">
    <citation type="journal article" date="2009" name="BMC Microbiol.">
        <title>The genome sequence of Geobacter metallireducens: features of metabolism, physiology and regulation common and dissimilar to Geobacter sulfurreducens.</title>
        <authorList>
            <person name="Aklujkar M."/>
            <person name="Krushkal J."/>
            <person name="DiBartolo G."/>
            <person name="Lapidus A."/>
            <person name="Land M.L."/>
            <person name="Lovley D.R."/>
        </authorList>
    </citation>
    <scope>NUCLEOTIDE SEQUENCE [LARGE SCALE GENOMIC DNA]</scope>
    <source>
        <strain>ATCC 53774 / DSM 7210 / GS-15</strain>
    </source>
</reference>
<gene>
    <name evidence="1" type="primary">nuoA2</name>
    <name type="ordered locus">Gmet_3355</name>
</gene>
<protein>
    <recommendedName>
        <fullName evidence="1">NADH-quinone oxidoreductase subunit A 2</fullName>
        <ecNumber evidence="1">7.1.1.-</ecNumber>
    </recommendedName>
    <alternativeName>
        <fullName evidence="1">NADH dehydrogenase I subunit A 2</fullName>
    </alternativeName>
    <alternativeName>
        <fullName evidence="1">NDH-1 subunit A 2</fullName>
    </alternativeName>
    <alternativeName>
        <fullName evidence="1">NUO1 2</fullName>
    </alternativeName>
</protein>
<dbReference type="EC" id="7.1.1.-" evidence="1"/>
<dbReference type="EMBL" id="CP000148">
    <property type="protein sequence ID" value="ABB33567.1"/>
    <property type="molecule type" value="Genomic_DNA"/>
</dbReference>
<dbReference type="RefSeq" id="WP_004512581.1">
    <property type="nucleotide sequence ID" value="NC_007517.1"/>
</dbReference>
<dbReference type="SMR" id="Q39QA7"/>
<dbReference type="STRING" id="269799.Gmet_3355"/>
<dbReference type="KEGG" id="gme:Gmet_3355"/>
<dbReference type="eggNOG" id="COG0838">
    <property type="taxonomic scope" value="Bacteria"/>
</dbReference>
<dbReference type="HOGENOM" id="CLU_119549_3_1_7"/>
<dbReference type="Proteomes" id="UP000007073">
    <property type="component" value="Chromosome"/>
</dbReference>
<dbReference type="GO" id="GO:0030964">
    <property type="term" value="C:NADH dehydrogenase complex"/>
    <property type="evidence" value="ECO:0007669"/>
    <property type="project" value="TreeGrafter"/>
</dbReference>
<dbReference type="GO" id="GO:0005886">
    <property type="term" value="C:plasma membrane"/>
    <property type="evidence" value="ECO:0007669"/>
    <property type="project" value="UniProtKB-SubCell"/>
</dbReference>
<dbReference type="GO" id="GO:0008137">
    <property type="term" value="F:NADH dehydrogenase (ubiquinone) activity"/>
    <property type="evidence" value="ECO:0007669"/>
    <property type="project" value="InterPro"/>
</dbReference>
<dbReference type="GO" id="GO:0050136">
    <property type="term" value="F:NADH:ubiquinone reductase (non-electrogenic) activity"/>
    <property type="evidence" value="ECO:0007669"/>
    <property type="project" value="UniProtKB-UniRule"/>
</dbReference>
<dbReference type="GO" id="GO:0048038">
    <property type="term" value="F:quinone binding"/>
    <property type="evidence" value="ECO:0007669"/>
    <property type="project" value="UniProtKB-KW"/>
</dbReference>
<dbReference type="FunFam" id="1.20.58.1610:FF:000002">
    <property type="entry name" value="NADH-quinone oxidoreductase subunit A"/>
    <property type="match status" value="1"/>
</dbReference>
<dbReference type="Gene3D" id="1.20.58.1610">
    <property type="entry name" value="NADH:ubiquinone/plastoquinone oxidoreductase, chain 3"/>
    <property type="match status" value="1"/>
</dbReference>
<dbReference type="HAMAP" id="MF_01394">
    <property type="entry name" value="NDH1_NuoA"/>
    <property type="match status" value="1"/>
</dbReference>
<dbReference type="InterPro" id="IPR023043">
    <property type="entry name" value="NAD(P)H_OxRDtase_bac/plastid"/>
</dbReference>
<dbReference type="InterPro" id="IPR000440">
    <property type="entry name" value="NADH_UbQ/plastoQ_OxRdtase_su3"/>
</dbReference>
<dbReference type="InterPro" id="IPR038430">
    <property type="entry name" value="NDAH_ubi_oxred_su3_sf"/>
</dbReference>
<dbReference type="PANTHER" id="PTHR11058:SF22">
    <property type="entry name" value="NADH-QUINONE OXIDOREDUCTASE SUBUNIT A"/>
    <property type="match status" value="1"/>
</dbReference>
<dbReference type="PANTHER" id="PTHR11058">
    <property type="entry name" value="NADH-UBIQUINONE OXIDOREDUCTASE CHAIN 3"/>
    <property type="match status" value="1"/>
</dbReference>
<dbReference type="Pfam" id="PF00507">
    <property type="entry name" value="Oxidored_q4"/>
    <property type="match status" value="1"/>
</dbReference>
<name>NUOA2_GEOMG</name>
<proteinExistence type="inferred from homology"/>
<keyword id="KW-0997">Cell inner membrane</keyword>
<keyword id="KW-1003">Cell membrane</keyword>
<keyword id="KW-0472">Membrane</keyword>
<keyword id="KW-0520">NAD</keyword>
<keyword id="KW-0874">Quinone</keyword>
<keyword id="KW-1185">Reference proteome</keyword>
<keyword id="KW-1278">Translocase</keyword>
<keyword id="KW-0812">Transmembrane</keyword>
<keyword id="KW-1133">Transmembrane helix</keyword>
<keyword id="KW-0813">Transport</keyword>
<keyword id="KW-0830">Ubiquinone</keyword>
<accession>Q39QA7</accession>
<evidence type="ECO:0000255" key="1">
    <source>
        <dbReference type="HAMAP-Rule" id="MF_01394"/>
    </source>
</evidence>
<sequence>MLGAYLPILVLVAIAVIFGLCSLVFSSLIGQKKPSVVKLAPYECGCEPVGSARERFSVKFYIIAMLFILFDIEAVFLYPWSVLFKRLGMFGVMEMGVFIVILFVGYIYVWKKGALEWE</sequence>
<comment type="function">
    <text evidence="1">NDH-1 shuttles electrons from NADH, via FMN and iron-sulfur (Fe-S) centers, to quinones in the respiratory chain. The immediate electron acceptor for the enzyme in this species is believed to be ubiquinone. Couples the redox reaction to proton translocation (for every two electrons transferred, four hydrogen ions are translocated across the cytoplasmic membrane), and thus conserves the redox energy in a proton gradient.</text>
</comment>
<comment type="catalytic activity">
    <reaction evidence="1">
        <text>a quinone + NADH + 5 H(+)(in) = a quinol + NAD(+) + 4 H(+)(out)</text>
        <dbReference type="Rhea" id="RHEA:57888"/>
        <dbReference type="ChEBI" id="CHEBI:15378"/>
        <dbReference type="ChEBI" id="CHEBI:24646"/>
        <dbReference type="ChEBI" id="CHEBI:57540"/>
        <dbReference type="ChEBI" id="CHEBI:57945"/>
        <dbReference type="ChEBI" id="CHEBI:132124"/>
    </reaction>
</comment>
<comment type="subunit">
    <text evidence="1">NDH-1 is composed of 14 different subunits. Subunits NuoA, H, J, K, L, M, N constitute the membrane sector of the complex.</text>
</comment>
<comment type="subcellular location">
    <subcellularLocation>
        <location evidence="1">Cell inner membrane</location>
        <topology evidence="1">Multi-pass membrane protein</topology>
    </subcellularLocation>
</comment>
<comment type="similarity">
    <text evidence="1">Belongs to the complex I subunit 3 family.</text>
</comment>
<organism>
    <name type="scientific">Geobacter metallireducens (strain ATCC 53774 / DSM 7210 / GS-15)</name>
    <dbReference type="NCBI Taxonomy" id="269799"/>
    <lineage>
        <taxon>Bacteria</taxon>
        <taxon>Pseudomonadati</taxon>
        <taxon>Thermodesulfobacteriota</taxon>
        <taxon>Desulfuromonadia</taxon>
        <taxon>Geobacterales</taxon>
        <taxon>Geobacteraceae</taxon>
        <taxon>Geobacter</taxon>
    </lineage>
</organism>